<accession>A6ZWN8</accession>
<feature type="chain" id="PRO_0000351020" description="ATP-dependent DNA helicase CHL1">
    <location>
        <begin position="1"/>
        <end position="861"/>
    </location>
</feature>
<feature type="domain" description="Helicase ATP-binding" evidence="4">
    <location>
        <begin position="6"/>
        <end position="458"/>
    </location>
</feature>
<feature type="region of interest" description="Disordered" evidence="5">
    <location>
        <begin position="161"/>
        <end position="188"/>
    </location>
</feature>
<feature type="short sequence motif" description="DEAH box">
    <location>
        <begin position="393"/>
        <end position="396"/>
    </location>
</feature>
<feature type="binding site" evidence="4">
    <location>
        <begin position="42"/>
        <end position="49"/>
    </location>
    <ligand>
        <name>ATP</name>
        <dbReference type="ChEBI" id="CHEBI:30616"/>
    </ligand>
</feature>
<feature type="binding site" evidence="1">
    <location>
        <position position="280"/>
    </location>
    <ligand>
        <name>[4Fe-4S] cluster</name>
        <dbReference type="ChEBI" id="CHEBI:49883"/>
    </ligand>
</feature>
<feature type="binding site" evidence="1">
    <location>
        <position position="298"/>
    </location>
    <ligand>
        <name>[4Fe-4S] cluster</name>
        <dbReference type="ChEBI" id="CHEBI:49883"/>
    </ligand>
</feature>
<feature type="binding site" evidence="1">
    <location>
        <position position="308"/>
    </location>
    <ligand>
        <name>[4Fe-4S] cluster</name>
        <dbReference type="ChEBI" id="CHEBI:49883"/>
    </ligand>
</feature>
<feature type="binding site" evidence="1">
    <location>
        <position position="350"/>
    </location>
    <ligand>
        <name>[4Fe-4S] cluster</name>
        <dbReference type="ChEBI" id="CHEBI:49883"/>
    </ligand>
</feature>
<feature type="modified residue" description="Phosphoserine" evidence="2">
    <location>
        <position position="86"/>
    </location>
</feature>
<feature type="modified residue" description="Phosphoserine" evidence="2">
    <location>
        <position position="172"/>
    </location>
</feature>
<gene>
    <name type="primary">CHL1</name>
    <name type="ORF">SCY_5715</name>
</gene>
<comment type="function">
    <text evidence="2">ATP-dependent DNA helicase important for chromosome transmission and normal cell cycle progression in G(2)/M (By similarity). May have a role in changing DNA topology to allow the loading of proteins involved in maintaining sister chromatid cohesion in the vicinity of the centromeres (By similarity). Has a specific role in chromosome segregation during meiosis II (By similarity).</text>
</comment>
<comment type="catalytic activity">
    <reaction evidence="3">
        <text>Couples ATP hydrolysis with the unwinding of duplex DNA at the replication fork by translocating in the 5'-3' direction. This creates two antiparallel DNA single strands (ssDNA). The leading ssDNA polymer is the template for DNA polymerase III holoenzyme which synthesizes a continuous strand.</text>
        <dbReference type="EC" id="5.6.2.3"/>
    </reaction>
</comment>
<comment type="catalytic activity">
    <reaction evidence="3">
        <text>ATP + H2O = ADP + phosphate + H(+)</text>
        <dbReference type="Rhea" id="RHEA:13065"/>
        <dbReference type="ChEBI" id="CHEBI:15377"/>
        <dbReference type="ChEBI" id="CHEBI:15378"/>
        <dbReference type="ChEBI" id="CHEBI:30616"/>
        <dbReference type="ChEBI" id="CHEBI:43474"/>
        <dbReference type="ChEBI" id="CHEBI:456216"/>
        <dbReference type="EC" id="5.6.2.3"/>
    </reaction>
</comment>
<comment type="cofactor">
    <cofactor evidence="1">
        <name>[4Fe-4S] cluster</name>
        <dbReference type="ChEBI" id="CHEBI:49883"/>
    </cofactor>
    <text evidence="1">Binds 1 [4Fe-4S] cluster.</text>
</comment>
<comment type="subcellular location">
    <subcellularLocation>
        <location evidence="2">Nucleus</location>
    </subcellularLocation>
</comment>
<comment type="similarity">
    <text evidence="6">Belongs to the DEAD box helicase family. DEAH subfamily. DDX11/CHL1 sub-subfamily.</text>
</comment>
<sequence length="861" mass="98822">MDKKEYSETFYHPYKPYDIQVQLMETVYRVLSEGKKIAILESPTGTGKTLSLICATMTWLRMNKADIFTRMETNIKTNEDDSENLSDDEPDWVIDTYRKSVLQEKVDLLNDYEKHLNEINTTSCKQLKTMCDLDKEHGRYKSVDPLRKKRKGARHLDVSLEEQDFIPRPYESDSENNDTSKSTRGGRISDKDYKLSELNSQIITLLDKIDGKVSRDPNNGDRFDVTNQNPVKIYYASRTYSQLGQFTSQLRLPSFPSSFRDKVPNEKVKYLPLASKKQLCINPKVMKWKTLEAINDACADLRHSKEGCMFYQNTNEWRHCPDTLALRDMIFSEIQDIEDLVPLGKSLGICPYYASREALPIAEVVTLPYQYLLSESTRSSLQINLENSIVIIDEAHNLIETINSIYSSQISLEDLKNCHKGIVTYFNKFKSRLNPGNRVNLLKLNSLLMTLIQFIVKNFKKIGQEIDPNDMFTGSNIDTLNIHKLLRYIKVSKIAYKIDTYNQALKEEESSKNENPIKETHKKSVSSQPLLFKVSQFLYCLTNLTSEGQFFFEKNYSIKYMLLEPSKPFESILNQAKCVVLAGGTMEPMSEFLSNLLPEVPSKDITTLSCNHVIPKENLQTYITNQPELEFTFEKRMSPSLVNNHLFQFFVDLSKAVPKKGGIVAFFPSYQYLAHVIQCWKQNDRFATLNNVRKIFYEAKDGDDILSGYSDSVAEGRGSLLLAIVGGKLSEGINFQDDLCRAVVMVGLPFPNIFSGELIVKRKHLAAKIMKSGGTEEEASRATKEFMENICMKAVNQSVGRAIRHANDYANIYLLDVRYNRPNFRKKLSRWVQDSINSEHTTHQVISSTRKFFSMRSLNSR</sequence>
<keyword id="KW-0067">ATP-binding</keyword>
<keyword id="KW-0131">Cell cycle</keyword>
<keyword id="KW-0238">DNA-binding</keyword>
<keyword id="KW-0347">Helicase</keyword>
<keyword id="KW-0378">Hydrolase</keyword>
<keyword id="KW-0408">Iron</keyword>
<keyword id="KW-0411">Iron-sulfur</keyword>
<keyword id="KW-0413">Isomerase</keyword>
<keyword id="KW-0479">Metal-binding</keyword>
<keyword id="KW-0547">Nucleotide-binding</keyword>
<keyword id="KW-0539">Nucleus</keyword>
<keyword id="KW-0597">Phosphoprotein</keyword>
<dbReference type="EC" id="5.6.2.3" evidence="3"/>
<dbReference type="EMBL" id="AAFW02000135">
    <property type="protein sequence ID" value="EDN61130.1"/>
    <property type="molecule type" value="Genomic_DNA"/>
</dbReference>
<dbReference type="SMR" id="A6ZWN8"/>
<dbReference type="HOGENOM" id="CLU_006515_2_0_1"/>
<dbReference type="OrthoDB" id="30172at4893"/>
<dbReference type="Proteomes" id="UP000007060">
    <property type="component" value="Unassembled WGS sequence"/>
</dbReference>
<dbReference type="GO" id="GO:0005634">
    <property type="term" value="C:nucleus"/>
    <property type="evidence" value="ECO:0007669"/>
    <property type="project" value="UniProtKB-SubCell"/>
</dbReference>
<dbReference type="GO" id="GO:0005524">
    <property type="term" value="F:ATP binding"/>
    <property type="evidence" value="ECO:0007669"/>
    <property type="project" value="UniProtKB-KW"/>
</dbReference>
<dbReference type="GO" id="GO:0016887">
    <property type="term" value="F:ATP hydrolysis activity"/>
    <property type="evidence" value="ECO:0007669"/>
    <property type="project" value="RHEA"/>
</dbReference>
<dbReference type="GO" id="GO:0003677">
    <property type="term" value="F:DNA binding"/>
    <property type="evidence" value="ECO:0007669"/>
    <property type="project" value="UniProtKB-KW"/>
</dbReference>
<dbReference type="GO" id="GO:0003678">
    <property type="term" value="F:DNA helicase activity"/>
    <property type="evidence" value="ECO:0007669"/>
    <property type="project" value="InterPro"/>
</dbReference>
<dbReference type="GO" id="GO:0051536">
    <property type="term" value="F:iron-sulfur cluster binding"/>
    <property type="evidence" value="ECO:0007669"/>
    <property type="project" value="UniProtKB-KW"/>
</dbReference>
<dbReference type="GO" id="GO:0046872">
    <property type="term" value="F:metal ion binding"/>
    <property type="evidence" value="ECO:0007669"/>
    <property type="project" value="UniProtKB-KW"/>
</dbReference>
<dbReference type="GO" id="GO:0006974">
    <property type="term" value="P:DNA damage response"/>
    <property type="evidence" value="ECO:0007669"/>
    <property type="project" value="UniProtKB-ARBA"/>
</dbReference>
<dbReference type="GO" id="GO:0034085">
    <property type="term" value="P:establishment of sister chromatid cohesion"/>
    <property type="evidence" value="ECO:0007669"/>
    <property type="project" value="TreeGrafter"/>
</dbReference>
<dbReference type="GO" id="GO:0006139">
    <property type="term" value="P:nucleobase-containing compound metabolic process"/>
    <property type="evidence" value="ECO:0007669"/>
    <property type="project" value="InterPro"/>
</dbReference>
<dbReference type="FunFam" id="3.40.50.300:FF:001968">
    <property type="entry name" value="ATP-dependent DNA helicase CHL1"/>
    <property type="match status" value="1"/>
</dbReference>
<dbReference type="FunFam" id="3.40.50.300:FF:001372">
    <property type="entry name" value="ATP-dependent DNA helicase chl1"/>
    <property type="match status" value="1"/>
</dbReference>
<dbReference type="Gene3D" id="3.40.50.300">
    <property type="entry name" value="P-loop containing nucleotide triphosphate hydrolases"/>
    <property type="match status" value="3"/>
</dbReference>
<dbReference type="InterPro" id="IPR006555">
    <property type="entry name" value="ATP-dep_Helicase_C"/>
</dbReference>
<dbReference type="InterPro" id="IPR045028">
    <property type="entry name" value="DinG/Rad3-like"/>
</dbReference>
<dbReference type="InterPro" id="IPR002464">
    <property type="entry name" value="DNA/RNA_helicase_DEAH_CS"/>
</dbReference>
<dbReference type="InterPro" id="IPR014013">
    <property type="entry name" value="Helic_SF1/SF2_ATP-bd_DinG/Rad3"/>
</dbReference>
<dbReference type="InterPro" id="IPR006554">
    <property type="entry name" value="Helicase-like_DEXD_c2"/>
</dbReference>
<dbReference type="InterPro" id="IPR027417">
    <property type="entry name" value="P-loop_NTPase"/>
</dbReference>
<dbReference type="InterPro" id="IPR010614">
    <property type="entry name" value="RAD3-like_helicase_DEAD"/>
</dbReference>
<dbReference type="InterPro" id="IPR013020">
    <property type="entry name" value="Rad3/Chl1-like"/>
</dbReference>
<dbReference type="NCBIfam" id="TIGR00604">
    <property type="entry name" value="rad3"/>
    <property type="match status" value="1"/>
</dbReference>
<dbReference type="PANTHER" id="PTHR11472:SF41">
    <property type="entry name" value="ATP-DEPENDENT DNA HELICASE DDX11-RELATED"/>
    <property type="match status" value="1"/>
</dbReference>
<dbReference type="PANTHER" id="PTHR11472">
    <property type="entry name" value="DNA REPAIR DEAD HELICASE RAD3/XP-D SUBFAMILY MEMBER"/>
    <property type="match status" value="1"/>
</dbReference>
<dbReference type="Pfam" id="PF06733">
    <property type="entry name" value="DEAD_2"/>
    <property type="match status" value="1"/>
</dbReference>
<dbReference type="Pfam" id="PF13307">
    <property type="entry name" value="Helicase_C_2"/>
    <property type="match status" value="1"/>
</dbReference>
<dbReference type="SMART" id="SM00488">
    <property type="entry name" value="DEXDc2"/>
    <property type="match status" value="1"/>
</dbReference>
<dbReference type="SMART" id="SM00491">
    <property type="entry name" value="HELICc2"/>
    <property type="match status" value="1"/>
</dbReference>
<dbReference type="SUPFAM" id="SSF52540">
    <property type="entry name" value="P-loop containing nucleoside triphosphate hydrolases"/>
    <property type="match status" value="2"/>
</dbReference>
<dbReference type="PROSITE" id="PS00690">
    <property type="entry name" value="DEAH_ATP_HELICASE"/>
    <property type="match status" value="1"/>
</dbReference>
<dbReference type="PROSITE" id="PS51193">
    <property type="entry name" value="HELICASE_ATP_BIND_2"/>
    <property type="match status" value="1"/>
</dbReference>
<name>CHL1_YEAS7</name>
<evidence type="ECO:0000250" key="1">
    <source>
        <dbReference type="UniProtKB" id="P18074"/>
    </source>
</evidence>
<evidence type="ECO:0000250" key="2">
    <source>
        <dbReference type="UniProtKB" id="P22516"/>
    </source>
</evidence>
<evidence type="ECO:0000250" key="3">
    <source>
        <dbReference type="UniProtKB" id="Q96FC9"/>
    </source>
</evidence>
<evidence type="ECO:0000255" key="4">
    <source>
        <dbReference type="PROSITE-ProRule" id="PRU00541"/>
    </source>
</evidence>
<evidence type="ECO:0000256" key="5">
    <source>
        <dbReference type="SAM" id="MobiDB-lite"/>
    </source>
</evidence>
<evidence type="ECO:0000305" key="6"/>
<protein>
    <recommendedName>
        <fullName evidence="2">ATP-dependent DNA helicase CHL1</fullName>
        <ecNumber evidence="3">5.6.2.3</ecNumber>
    </recommendedName>
    <alternativeName>
        <fullName evidence="2">Chromosome loss protein 1</fullName>
    </alternativeName>
    <alternativeName>
        <fullName evidence="6">DNA 5'-3' helicase CHL1</fullName>
    </alternativeName>
</protein>
<organism>
    <name type="scientific">Saccharomyces cerevisiae (strain YJM789)</name>
    <name type="common">Baker's yeast</name>
    <dbReference type="NCBI Taxonomy" id="307796"/>
    <lineage>
        <taxon>Eukaryota</taxon>
        <taxon>Fungi</taxon>
        <taxon>Dikarya</taxon>
        <taxon>Ascomycota</taxon>
        <taxon>Saccharomycotina</taxon>
        <taxon>Saccharomycetes</taxon>
        <taxon>Saccharomycetales</taxon>
        <taxon>Saccharomycetaceae</taxon>
        <taxon>Saccharomyces</taxon>
    </lineage>
</organism>
<proteinExistence type="inferred from homology"/>
<reference key="1">
    <citation type="journal article" date="2007" name="Proc. Natl. Acad. Sci. U.S.A.">
        <title>Genome sequencing and comparative analysis of Saccharomyces cerevisiae strain YJM789.</title>
        <authorList>
            <person name="Wei W."/>
            <person name="McCusker J.H."/>
            <person name="Hyman R.W."/>
            <person name="Jones T."/>
            <person name="Ning Y."/>
            <person name="Cao Z."/>
            <person name="Gu Z."/>
            <person name="Bruno D."/>
            <person name="Miranda M."/>
            <person name="Nguyen M."/>
            <person name="Wilhelmy J."/>
            <person name="Komp C."/>
            <person name="Tamse R."/>
            <person name="Wang X."/>
            <person name="Jia P."/>
            <person name="Luedi P."/>
            <person name="Oefner P.J."/>
            <person name="David L."/>
            <person name="Dietrich F.S."/>
            <person name="Li Y."/>
            <person name="Davis R.W."/>
            <person name="Steinmetz L.M."/>
        </authorList>
    </citation>
    <scope>NUCLEOTIDE SEQUENCE [LARGE SCALE GENOMIC DNA]</scope>
    <source>
        <strain>YJM789</strain>
    </source>
</reference>